<reference key="1">
    <citation type="journal article" date="2005" name="Infect. Immun.">
        <title>Whole-genome analyses of speciation events in pathogenic Brucellae.</title>
        <authorList>
            <person name="Chain P.S."/>
            <person name="Comerci D.J."/>
            <person name="Tolmasky M.E."/>
            <person name="Larimer F.W."/>
            <person name="Malfatti S.A."/>
            <person name="Vergez L.M."/>
            <person name="Aguero F."/>
            <person name="Land M.L."/>
            <person name="Ugalde R.A."/>
            <person name="Garcia E."/>
        </authorList>
    </citation>
    <scope>NUCLEOTIDE SEQUENCE [LARGE SCALE GENOMIC DNA]</scope>
    <source>
        <strain>2308</strain>
    </source>
</reference>
<dbReference type="EMBL" id="AM040264">
    <property type="protein sequence ID" value="CAJ11204.1"/>
    <property type="molecule type" value="Genomic_DNA"/>
</dbReference>
<dbReference type="RefSeq" id="WP_002964355.1">
    <property type="nucleotide sequence ID" value="NZ_KN046823.1"/>
</dbReference>
<dbReference type="SMR" id="P0C0Z4"/>
<dbReference type="STRING" id="359391.BAB1_1248"/>
<dbReference type="GeneID" id="97533531"/>
<dbReference type="KEGG" id="bmf:BAB1_1248"/>
<dbReference type="PATRIC" id="fig|359391.11.peg.148"/>
<dbReference type="HOGENOM" id="CLU_078858_2_1_5"/>
<dbReference type="PhylomeDB" id="P0C0Z4"/>
<dbReference type="Proteomes" id="UP000002719">
    <property type="component" value="Chromosome I"/>
</dbReference>
<dbReference type="GO" id="GO:0022625">
    <property type="term" value="C:cytosolic large ribosomal subunit"/>
    <property type="evidence" value="ECO:0007669"/>
    <property type="project" value="TreeGrafter"/>
</dbReference>
<dbReference type="GO" id="GO:0019843">
    <property type="term" value="F:rRNA binding"/>
    <property type="evidence" value="ECO:0007669"/>
    <property type="project" value="UniProtKB-UniRule"/>
</dbReference>
<dbReference type="GO" id="GO:0003735">
    <property type="term" value="F:structural constituent of ribosome"/>
    <property type="evidence" value="ECO:0007669"/>
    <property type="project" value="InterPro"/>
</dbReference>
<dbReference type="GO" id="GO:0000049">
    <property type="term" value="F:tRNA binding"/>
    <property type="evidence" value="ECO:0007669"/>
    <property type="project" value="UniProtKB-KW"/>
</dbReference>
<dbReference type="GO" id="GO:0006412">
    <property type="term" value="P:translation"/>
    <property type="evidence" value="ECO:0007669"/>
    <property type="project" value="UniProtKB-UniRule"/>
</dbReference>
<dbReference type="CDD" id="cd01433">
    <property type="entry name" value="Ribosomal_L16_L10e"/>
    <property type="match status" value="1"/>
</dbReference>
<dbReference type="FunFam" id="3.90.1170.10:FF:000001">
    <property type="entry name" value="50S ribosomal protein L16"/>
    <property type="match status" value="1"/>
</dbReference>
<dbReference type="Gene3D" id="3.90.1170.10">
    <property type="entry name" value="Ribosomal protein L10e/L16"/>
    <property type="match status" value="1"/>
</dbReference>
<dbReference type="HAMAP" id="MF_01342">
    <property type="entry name" value="Ribosomal_uL16"/>
    <property type="match status" value="1"/>
</dbReference>
<dbReference type="InterPro" id="IPR047873">
    <property type="entry name" value="Ribosomal_uL16"/>
</dbReference>
<dbReference type="InterPro" id="IPR000114">
    <property type="entry name" value="Ribosomal_uL16_bact-type"/>
</dbReference>
<dbReference type="InterPro" id="IPR020798">
    <property type="entry name" value="Ribosomal_uL16_CS"/>
</dbReference>
<dbReference type="InterPro" id="IPR016180">
    <property type="entry name" value="Ribosomal_uL16_dom"/>
</dbReference>
<dbReference type="InterPro" id="IPR036920">
    <property type="entry name" value="Ribosomal_uL16_sf"/>
</dbReference>
<dbReference type="NCBIfam" id="TIGR01164">
    <property type="entry name" value="rplP_bact"/>
    <property type="match status" value="1"/>
</dbReference>
<dbReference type="PANTHER" id="PTHR12220">
    <property type="entry name" value="50S/60S RIBOSOMAL PROTEIN L16"/>
    <property type="match status" value="1"/>
</dbReference>
<dbReference type="PANTHER" id="PTHR12220:SF13">
    <property type="entry name" value="LARGE RIBOSOMAL SUBUNIT PROTEIN UL16M"/>
    <property type="match status" value="1"/>
</dbReference>
<dbReference type="Pfam" id="PF00252">
    <property type="entry name" value="Ribosomal_L16"/>
    <property type="match status" value="1"/>
</dbReference>
<dbReference type="PRINTS" id="PR00060">
    <property type="entry name" value="RIBOSOMALL16"/>
</dbReference>
<dbReference type="SUPFAM" id="SSF54686">
    <property type="entry name" value="Ribosomal protein L16p/L10e"/>
    <property type="match status" value="1"/>
</dbReference>
<dbReference type="PROSITE" id="PS00586">
    <property type="entry name" value="RIBOSOMAL_L16_1"/>
    <property type="match status" value="1"/>
</dbReference>
<dbReference type="PROSITE" id="PS00701">
    <property type="entry name" value="RIBOSOMAL_L16_2"/>
    <property type="match status" value="1"/>
</dbReference>
<comment type="function">
    <text evidence="1">Binds 23S rRNA and is also seen to make contacts with the A and possibly P site tRNAs.</text>
</comment>
<comment type="subunit">
    <text evidence="1">Part of the 50S ribosomal subunit.</text>
</comment>
<comment type="similarity">
    <text evidence="1">Belongs to the universal ribosomal protein uL16 family.</text>
</comment>
<gene>
    <name evidence="1" type="primary">rplP</name>
    <name type="ordered locus">BAB1_1248</name>
</gene>
<name>RL16_BRUA2</name>
<keyword id="KW-1185">Reference proteome</keyword>
<keyword id="KW-0687">Ribonucleoprotein</keyword>
<keyword id="KW-0689">Ribosomal protein</keyword>
<keyword id="KW-0694">RNA-binding</keyword>
<keyword id="KW-0699">rRNA-binding</keyword>
<keyword id="KW-0820">tRNA-binding</keyword>
<sequence length="137" mass="15501">MMQPKRTKFRKQFKGRIHGNSKGGTDLNFGAFGLKALEPERVTARQIEAARRAITRHMKRAGRVWIRIFPDLPVTSKPTEVRMGKGKGSVDYWACRVAPGRVMFELDGVPEDVAREALRLGAAKLPIKTRFIQRIAE</sequence>
<proteinExistence type="inferred from homology"/>
<evidence type="ECO:0000255" key="1">
    <source>
        <dbReference type="HAMAP-Rule" id="MF_01342"/>
    </source>
</evidence>
<evidence type="ECO:0000305" key="2"/>
<feature type="chain" id="PRO_0000062061" description="Large ribosomal subunit protein uL16">
    <location>
        <begin position="1"/>
        <end position="137"/>
    </location>
</feature>
<accession>P0C0Z4</accession>
<accession>Q57CR5</accession>
<protein>
    <recommendedName>
        <fullName evidence="1">Large ribosomal subunit protein uL16</fullName>
    </recommendedName>
    <alternativeName>
        <fullName evidence="2">50S ribosomal protein L16</fullName>
    </alternativeName>
</protein>
<organism>
    <name type="scientific">Brucella abortus (strain 2308)</name>
    <dbReference type="NCBI Taxonomy" id="359391"/>
    <lineage>
        <taxon>Bacteria</taxon>
        <taxon>Pseudomonadati</taxon>
        <taxon>Pseudomonadota</taxon>
        <taxon>Alphaproteobacteria</taxon>
        <taxon>Hyphomicrobiales</taxon>
        <taxon>Brucellaceae</taxon>
        <taxon>Brucella/Ochrobactrum group</taxon>
        <taxon>Brucella</taxon>
    </lineage>
</organism>